<gene>
    <name evidence="1" type="primary">rpmB</name>
    <name type="ordered locus">Tcr_1918</name>
</gene>
<reference key="1">
    <citation type="journal article" date="2006" name="PLoS Biol.">
        <title>The genome of deep-sea vent chemolithoautotroph Thiomicrospira crunogena XCL-2.</title>
        <authorList>
            <person name="Scott K.M."/>
            <person name="Sievert S.M."/>
            <person name="Abril F.N."/>
            <person name="Ball L.A."/>
            <person name="Barrett C.J."/>
            <person name="Blake R.A."/>
            <person name="Boller A.J."/>
            <person name="Chain P.S.G."/>
            <person name="Clark J.A."/>
            <person name="Davis C.R."/>
            <person name="Detter C."/>
            <person name="Do K.F."/>
            <person name="Dobrinski K.P."/>
            <person name="Faza B.I."/>
            <person name="Fitzpatrick K.A."/>
            <person name="Freyermuth S.K."/>
            <person name="Harmer T.L."/>
            <person name="Hauser L.J."/>
            <person name="Huegler M."/>
            <person name="Kerfeld C.A."/>
            <person name="Klotz M.G."/>
            <person name="Kong W.W."/>
            <person name="Land M."/>
            <person name="Lapidus A."/>
            <person name="Larimer F.W."/>
            <person name="Longo D.L."/>
            <person name="Lucas S."/>
            <person name="Malfatti S.A."/>
            <person name="Massey S.E."/>
            <person name="Martin D.D."/>
            <person name="McCuddin Z."/>
            <person name="Meyer F."/>
            <person name="Moore J.L."/>
            <person name="Ocampo L.H. Jr."/>
            <person name="Paul J.H."/>
            <person name="Paulsen I.T."/>
            <person name="Reep D.K."/>
            <person name="Ren Q."/>
            <person name="Ross R.L."/>
            <person name="Sato P.Y."/>
            <person name="Thomas P."/>
            <person name="Tinkham L.E."/>
            <person name="Zeruth G.T."/>
        </authorList>
    </citation>
    <scope>NUCLEOTIDE SEQUENCE [LARGE SCALE GENOMIC DNA]</scope>
    <source>
        <strain>DSM 25203 / XCL-2</strain>
    </source>
</reference>
<accession>Q31EB5</accession>
<comment type="similarity">
    <text evidence="1">Belongs to the bacterial ribosomal protein bL28 family.</text>
</comment>
<organism>
    <name type="scientific">Hydrogenovibrio crunogenus (strain DSM 25203 / XCL-2)</name>
    <name type="common">Thiomicrospira crunogena</name>
    <dbReference type="NCBI Taxonomy" id="317025"/>
    <lineage>
        <taxon>Bacteria</taxon>
        <taxon>Pseudomonadati</taxon>
        <taxon>Pseudomonadota</taxon>
        <taxon>Gammaproteobacteria</taxon>
        <taxon>Thiotrichales</taxon>
        <taxon>Piscirickettsiaceae</taxon>
        <taxon>Hydrogenovibrio</taxon>
    </lineage>
</organism>
<evidence type="ECO:0000255" key="1">
    <source>
        <dbReference type="HAMAP-Rule" id="MF_00373"/>
    </source>
</evidence>
<evidence type="ECO:0000305" key="2"/>
<proteinExistence type="inferred from homology"/>
<keyword id="KW-0687">Ribonucleoprotein</keyword>
<keyword id="KW-0689">Ribosomal protein</keyword>
<name>RL28_HYDCU</name>
<feature type="chain" id="PRO_1000007394" description="Large ribosomal subunit protein bL28">
    <location>
        <begin position="1"/>
        <end position="78"/>
    </location>
</feature>
<dbReference type="EMBL" id="CP000109">
    <property type="protein sequence ID" value="ABB42508.1"/>
    <property type="molecule type" value="Genomic_DNA"/>
</dbReference>
<dbReference type="SMR" id="Q31EB5"/>
<dbReference type="STRING" id="317025.Tcr_1918"/>
<dbReference type="KEGG" id="tcx:Tcr_1918"/>
<dbReference type="eggNOG" id="COG0227">
    <property type="taxonomic scope" value="Bacteria"/>
</dbReference>
<dbReference type="HOGENOM" id="CLU_064548_3_1_6"/>
<dbReference type="OrthoDB" id="9805609at2"/>
<dbReference type="GO" id="GO:0022625">
    <property type="term" value="C:cytosolic large ribosomal subunit"/>
    <property type="evidence" value="ECO:0007669"/>
    <property type="project" value="TreeGrafter"/>
</dbReference>
<dbReference type="GO" id="GO:0003735">
    <property type="term" value="F:structural constituent of ribosome"/>
    <property type="evidence" value="ECO:0007669"/>
    <property type="project" value="InterPro"/>
</dbReference>
<dbReference type="GO" id="GO:0006412">
    <property type="term" value="P:translation"/>
    <property type="evidence" value="ECO:0007669"/>
    <property type="project" value="UniProtKB-UniRule"/>
</dbReference>
<dbReference type="FunFam" id="2.30.170.40:FF:000001">
    <property type="entry name" value="50S ribosomal protein L28"/>
    <property type="match status" value="1"/>
</dbReference>
<dbReference type="Gene3D" id="2.30.170.40">
    <property type="entry name" value="Ribosomal protein L28/L24"/>
    <property type="match status" value="1"/>
</dbReference>
<dbReference type="HAMAP" id="MF_00373">
    <property type="entry name" value="Ribosomal_bL28"/>
    <property type="match status" value="1"/>
</dbReference>
<dbReference type="InterPro" id="IPR026569">
    <property type="entry name" value="Ribosomal_bL28"/>
</dbReference>
<dbReference type="InterPro" id="IPR034704">
    <property type="entry name" value="Ribosomal_bL28/bL31-like_sf"/>
</dbReference>
<dbReference type="InterPro" id="IPR001383">
    <property type="entry name" value="Ribosomal_bL28_bact-type"/>
</dbReference>
<dbReference type="InterPro" id="IPR037147">
    <property type="entry name" value="Ribosomal_bL28_sf"/>
</dbReference>
<dbReference type="NCBIfam" id="TIGR00009">
    <property type="entry name" value="L28"/>
    <property type="match status" value="1"/>
</dbReference>
<dbReference type="PANTHER" id="PTHR13528">
    <property type="entry name" value="39S RIBOSOMAL PROTEIN L28, MITOCHONDRIAL"/>
    <property type="match status" value="1"/>
</dbReference>
<dbReference type="PANTHER" id="PTHR13528:SF2">
    <property type="entry name" value="LARGE RIBOSOMAL SUBUNIT PROTEIN BL28M"/>
    <property type="match status" value="1"/>
</dbReference>
<dbReference type="Pfam" id="PF00830">
    <property type="entry name" value="Ribosomal_L28"/>
    <property type="match status" value="1"/>
</dbReference>
<dbReference type="SUPFAM" id="SSF143800">
    <property type="entry name" value="L28p-like"/>
    <property type="match status" value="1"/>
</dbReference>
<sequence>MSKICQVTGKKPVVGNNVSHSHRKTRRRFLPNLQTHRFWVENENRFVKLRLSTSGMRIIDKNGIESVLAEMRARGEKV</sequence>
<protein>
    <recommendedName>
        <fullName evidence="1">Large ribosomal subunit protein bL28</fullName>
    </recommendedName>
    <alternativeName>
        <fullName evidence="2">50S ribosomal protein L28</fullName>
    </alternativeName>
</protein>